<comment type="subunit">
    <text evidence="1">Interacts with ribosomes.</text>
</comment>
<name>YP073_YEAST</name>
<gene>
    <name type="ordered locus">YPL073C</name>
</gene>
<evidence type="ECO:0000269" key="1">
    <source>
    </source>
</evidence>
<proteinExistence type="evidence at protein level"/>
<feature type="chain" id="PRO_0000203493" description="Uncharacterized protein YPL073C">
    <location>
        <begin position="1"/>
        <end position="161"/>
    </location>
</feature>
<protein>
    <recommendedName>
        <fullName>Uncharacterized protein YPL073C</fullName>
    </recommendedName>
</protein>
<accession>P40323</accession>
<sequence>MDSNVFITIFGEIDVLRSFTDIKSKIKLVRLSCKGASELDEFSSRLCLVVLSTVGLSPFALFDSLVSNSRRTVLIRFKYSTNRGIPARPCKDDVMKQSFPRLIKPTVVYFPILCLESPKTSALRLGAMAYREAAIIKPHETFLISEVGDSVTFFIQDILCL</sequence>
<dbReference type="EMBL" id="U41849">
    <property type="protein sequence ID" value="AAB68269.1"/>
    <property type="molecule type" value="Genomic_DNA"/>
</dbReference>
<dbReference type="EMBL" id="X81071">
    <property type="protein sequence ID" value="CAA56958.1"/>
    <property type="molecule type" value="Genomic_DNA"/>
</dbReference>
<dbReference type="EMBL" id="BK006949">
    <property type="status" value="NOT_ANNOTATED_CDS"/>
    <property type="molecule type" value="Genomic_DNA"/>
</dbReference>
<dbReference type="PIR" id="S69456">
    <property type="entry name" value="S69456"/>
</dbReference>
<dbReference type="DIP" id="DIP-4026N"/>
<dbReference type="FunCoup" id="P40323">
    <property type="interactions" value="2"/>
</dbReference>
<dbReference type="IntAct" id="P40323">
    <property type="interactions" value="1"/>
</dbReference>
<dbReference type="PaxDb" id="4932-YPL073C"/>
<dbReference type="EnsemblFungi" id="YPL073C_mRNA">
    <property type="protein sequence ID" value="YPL073C"/>
    <property type="gene ID" value="YPL073C"/>
</dbReference>
<dbReference type="AGR" id="SGD:S000005994"/>
<dbReference type="SGD" id="S000005994">
    <property type="gene designation" value="YPL073C"/>
</dbReference>
<dbReference type="HOGENOM" id="CLU_1645055_0_0_1"/>
<dbReference type="InParanoid" id="P40323"/>
<dbReference type="PRO" id="PR:P40323"/>
<dbReference type="Proteomes" id="UP000002311">
    <property type="component" value="Chromosome XVI"/>
</dbReference>
<dbReference type="RNAct" id="P40323">
    <property type="molecule type" value="protein"/>
</dbReference>
<reference key="1">
    <citation type="journal article" date="1997" name="Nature">
        <title>The nucleotide sequence of Saccharomyces cerevisiae chromosome XVI.</title>
        <authorList>
            <person name="Bussey H."/>
            <person name="Storms R.K."/>
            <person name="Ahmed A."/>
            <person name="Albermann K."/>
            <person name="Allen E."/>
            <person name="Ansorge W."/>
            <person name="Araujo R."/>
            <person name="Aparicio A."/>
            <person name="Barrell B.G."/>
            <person name="Badcock K."/>
            <person name="Benes V."/>
            <person name="Botstein D."/>
            <person name="Bowman S."/>
            <person name="Brueckner M."/>
            <person name="Carpenter J."/>
            <person name="Cherry J.M."/>
            <person name="Chung E."/>
            <person name="Churcher C.M."/>
            <person name="Coster F."/>
            <person name="Davis K."/>
            <person name="Davis R.W."/>
            <person name="Dietrich F.S."/>
            <person name="Delius H."/>
            <person name="DiPaolo T."/>
            <person name="Dubois E."/>
            <person name="Duesterhoeft A."/>
            <person name="Duncan M."/>
            <person name="Floeth M."/>
            <person name="Fortin N."/>
            <person name="Friesen J.D."/>
            <person name="Fritz C."/>
            <person name="Goffeau A."/>
            <person name="Hall J."/>
            <person name="Hebling U."/>
            <person name="Heumann K."/>
            <person name="Hilbert H."/>
            <person name="Hillier L.W."/>
            <person name="Hunicke-Smith S."/>
            <person name="Hyman R.W."/>
            <person name="Johnston M."/>
            <person name="Kalman S."/>
            <person name="Kleine K."/>
            <person name="Komp C."/>
            <person name="Kurdi O."/>
            <person name="Lashkari D."/>
            <person name="Lew H."/>
            <person name="Lin A."/>
            <person name="Lin D."/>
            <person name="Louis E.J."/>
            <person name="Marathe R."/>
            <person name="Messenguy F."/>
            <person name="Mewes H.-W."/>
            <person name="Mirtipati S."/>
            <person name="Moestl D."/>
            <person name="Mueller-Auer S."/>
            <person name="Namath A."/>
            <person name="Nentwich U."/>
            <person name="Oefner P."/>
            <person name="Pearson D."/>
            <person name="Petel F.X."/>
            <person name="Pohl T.M."/>
            <person name="Purnelle B."/>
            <person name="Rajandream M.A."/>
            <person name="Rechmann S."/>
            <person name="Rieger M."/>
            <person name="Riles L."/>
            <person name="Roberts D."/>
            <person name="Schaefer M."/>
            <person name="Scharfe M."/>
            <person name="Scherens B."/>
            <person name="Schramm S."/>
            <person name="Schroeder M."/>
            <person name="Sdicu A.-M."/>
            <person name="Tettelin H."/>
            <person name="Urrestarazu L.A."/>
            <person name="Ushinsky S."/>
            <person name="Vierendeels F."/>
            <person name="Vissers S."/>
            <person name="Voss H."/>
            <person name="Walsh S.V."/>
            <person name="Wambutt R."/>
            <person name="Wang Y."/>
            <person name="Wedler E."/>
            <person name="Wedler H."/>
            <person name="Winnett E."/>
            <person name="Zhong W.-W."/>
            <person name="Zollner A."/>
            <person name="Vo D.H."/>
            <person name="Hani J."/>
        </authorList>
    </citation>
    <scope>NUCLEOTIDE SEQUENCE [LARGE SCALE GENOMIC DNA]</scope>
    <source>
        <strain>ATCC 204508 / S288c</strain>
    </source>
</reference>
<reference key="2">
    <citation type="journal article" date="2014" name="G3 (Bethesda)">
        <title>The reference genome sequence of Saccharomyces cerevisiae: Then and now.</title>
        <authorList>
            <person name="Engel S.R."/>
            <person name="Dietrich F.S."/>
            <person name="Fisk D.G."/>
            <person name="Binkley G."/>
            <person name="Balakrishnan R."/>
            <person name="Costanzo M.C."/>
            <person name="Dwight S.S."/>
            <person name="Hitz B.C."/>
            <person name="Karra K."/>
            <person name="Nash R.S."/>
            <person name="Weng S."/>
            <person name="Wong E.D."/>
            <person name="Lloyd P."/>
            <person name="Skrzypek M.S."/>
            <person name="Miyasato S.R."/>
            <person name="Simison M."/>
            <person name="Cherry J.M."/>
        </authorList>
    </citation>
    <scope>GENOME REANNOTATION</scope>
    <source>
        <strain>ATCC 204508 / S288c</strain>
    </source>
</reference>
<reference key="3">
    <citation type="journal article" date="1994" name="Yeast">
        <title>Identification of a set of yeast genes coding for a novel family of putative ATPases with high similarity to constituents of the 26S protease complex.</title>
        <authorList>
            <person name="Schnall R."/>
            <person name="Mannhaupt G."/>
            <person name="Stucka R."/>
            <person name="Tauer R."/>
            <person name="Ehnle S."/>
            <person name="Schwarzlose C."/>
            <person name="Vetter I."/>
            <person name="Feldmann H."/>
        </authorList>
    </citation>
    <scope>NUCLEOTIDE SEQUENCE [GENOMIC DNA] OF 18-161</scope>
    <source>
        <strain>ATCC 204508 / S288c</strain>
    </source>
</reference>
<reference key="4">
    <citation type="journal article" date="2006" name="Genes Dev.">
        <title>Systematic identification and functional screens of uncharacterized proteins associated with eukaryotic ribosomal complexes.</title>
        <authorList>
            <person name="Fleischer T.C."/>
            <person name="Weaver C.M."/>
            <person name="McAfee K.J."/>
            <person name="Jennings J.L."/>
            <person name="Link A.J."/>
        </authorList>
    </citation>
    <scope>IDENTIFICATION BY MASS SPECTROMETRY</scope>
    <scope>INTERACTION WITH RIBOSOMES</scope>
</reference>
<keyword id="KW-1185">Reference proteome</keyword>
<organism>
    <name type="scientific">Saccharomyces cerevisiae (strain ATCC 204508 / S288c)</name>
    <name type="common">Baker's yeast</name>
    <dbReference type="NCBI Taxonomy" id="559292"/>
    <lineage>
        <taxon>Eukaryota</taxon>
        <taxon>Fungi</taxon>
        <taxon>Dikarya</taxon>
        <taxon>Ascomycota</taxon>
        <taxon>Saccharomycotina</taxon>
        <taxon>Saccharomycetes</taxon>
        <taxon>Saccharomycetales</taxon>
        <taxon>Saccharomycetaceae</taxon>
        <taxon>Saccharomyces</taxon>
    </lineage>
</organism>